<dbReference type="EC" id="6.1.1.15" evidence="1"/>
<dbReference type="EMBL" id="AP008231">
    <property type="protein sequence ID" value="BAD80326.1"/>
    <property type="molecule type" value="Genomic_DNA"/>
</dbReference>
<dbReference type="RefSeq" id="WP_011244446.1">
    <property type="nucleotide sequence ID" value="NC_006576.1"/>
</dbReference>
<dbReference type="SMR" id="Q5N044"/>
<dbReference type="KEGG" id="syc:syc2136_c"/>
<dbReference type="eggNOG" id="COG0442">
    <property type="taxonomic scope" value="Bacteria"/>
</dbReference>
<dbReference type="Proteomes" id="UP000001175">
    <property type="component" value="Chromosome"/>
</dbReference>
<dbReference type="GO" id="GO:0005829">
    <property type="term" value="C:cytosol"/>
    <property type="evidence" value="ECO:0007669"/>
    <property type="project" value="TreeGrafter"/>
</dbReference>
<dbReference type="GO" id="GO:0002161">
    <property type="term" value="F:aminoacyl-tRNA deacylase activity"/>
    <property type="evidence" value="ECO:0007669"/>
    <property type="project" value="InterPro"/>
</dbReference>
<dbReference type="GO" id="GO:0005524">
    <property type="term" value="F:ATP binding"/>
    <property type="evidence" value="ECO:0007669"/>
    <property type="project" value="UniProtKB-UniRule"/>
</dbReference>
<dbReference type="GO" id="GO:0004827">
    <property type="term" value="F:proline-tRNA ligase activity"/>
    <property type="evidence" value="ECO:0007669"/>
    <property type="project" value="UniProtKB-UniRule"/>
</dbReference>
<dbReference type="GO" id="GO:0006433">
    <property type="term" value="P:prolyl-tRNA aminoacylation"/>
    <property type="evidence" value="ECO:0007669"/>
    <property type="project" value="UniProtKB-UniRule"/>
</dbReference>
<dbReference type="CDD" id="cd04334">
    <property type="entry name" value="ProRS-INS"/>
    <property type="match status" value="1"/>
</dbReference>
<dbReference type="CDD" id="cd00861">
    <property type="entry name" value="ProRS_anticodon_short"/>
    <property type="match status" value="1"/>
</dbReference>
<dbReference type="CDD" id="cd00779">
    <property type="entry name" value="ProRS_core_prok"/>
    <property type="match status" value="1"/>
</dbReference>
<dbReference type="FunFam" id="3.40.50.800:FF:000011">
    <property type="entry name" value="Proline--tRNA ligase"/>
    <property type="match status" value="1"/>
</dbReference>
<dbReference type="Gene3D" id="3.40.50.800">
    <property type="entry name" value="Anticodon-binding domain"/>
    <property type="match status" value="1"/>
</dbReference>
<dbReference type="Gene3D" id="3.30.930.10">
    <property type="entry name" value="Bira Bifunctional Protein, Domain 2"/>
    <property type="match status" value="2"/>
</dbReference>
<dbReference type="HAMAP" id="MF_01569">
    <property type="entry name" value="Pro_tRNA_synth_type1"/>
    <property type="match status" value="1"/>
</dbReference>
<dbReference type="InterPro" id="IPR002314">
    <property type="entry name" value="aa-tRNA-synt_IIb"/>
</dbReference>
<dbReference type="InterPro" id="IPR006195">
    <property type="entry name" value="aa-tRNA-synth_II"/>
</dbReference>
<dbReference type="InterPro" id="IPR045864">
    <property type="entry name" value="aa-tRNA-synth_II/BPL/LPL"/>
</dbReference>
<dbReference type="InterPro" id="IPR004154">
    <property type="entry name" value="Anticodon-bd"/>
</dbReference>
<dbReference type="InterPro" id="IPR036621">
    <property type="entry name" value="Anticodon-bd_dom_sf"/>
</dbReference>
<dbReference type="InterPro" id="IPR002316">
    <property type="entry name" value="Pro-tRNA-ligase_IIa"/>
</dbReference>
<dbReference type="InterPro" id="IPR004500">
    <property type="entry name" value="Pro-tRNA-synth_IIa_bac-type"/>
</dbReference>
<dbReference type="InterPro" id="IPR023717">
    <property type="entry name" value="Pro-tRNA-Synthase_IIa_type1"/>
</dbReference>
<dbReference type="InterPro" id="IPR050062">
    <property type="entry name" value="Pro-tRNA_synthetase"/>
</dbReference>
<dbReference type="InterPro" id="IPR044140">
    <property type="entry name" value="ProRS_anticodon_short"/>
</dbReference>
<dbReference type="InterPro" id="IPR033730">
    <property type="entry name" value="ProRS_core_prok"/>
</dbReference>
<dbReference type="InterPro" id="IPR036754">
    <property type="entry name" value="YbaK/aa-tRNA-synt-asso_dom_sf"/>
</dbReference>
<dbReference type="InterPro" id="IPR007214">
    <property type="entry name" value="YbaK/aa-tRNA-synth-assoc-dom"/>
</dbReference>
<dbReference type="NCBIfam" id="NF006625">
    <property type="entry name" value="PRK09194.1"/>
    <property type="match status" value="1"/>
</dbReference>
<dbReference type="NCBIfam" id="TIGR00409">
    <property type="entry name" value="proS_fam_II"/>
    <property type="match status" value="1"/>
</dbReference>
<dbReference type="PANTHER" id="PTHR42753">
    <property type="entry name" value="MITOCHONDRIAL RIBOSOME PROTEIN L39/PROLYL-TRNA LIGASE FAMILY MEMBER"/>
    <property type="match status" value="1"/>
</dbReference>
<dbReference type="PANTHER" id="PTHR42753:SF2">
    <property type="entry name" value="PROLINE--TRNA LIGASE"/>
    <property type="match status" value="1"/>
</dbReference>
<dbReference type="Pfam" id="PF03129">
    <property type="entry name" value="HGTP_anticodon"/>
    <property type="match status" value="1"/>
</dbReference>
<dbReference type="Pfam" id="PF00587">
    <property type="entry name" value="tRNA-synt_2b"/>
    <property type="match status" value="1"/>
</dbReference>
<dbReference type="Pfam" id="PF04073">
    <property type="entry name" value="tRNA_edit"/>
    <property type="match status" value="1"/>
</dbReference>
<dbReference type="PRINTS" id="PR01046">
    <property type="entry name" value="TRNASYNTHPRO"/>
</dbReference>
<dbReference type="SUPFAM" id="SSF52954">
    <property type="entry name" value="Class II aaRS ABD-related"/>
    <property type="match status" value="1"/>
</dbReference>
<dbReference type="SUPFAM" id="SSF55681">
    <property type="entry name" value="Class II aaRS and biotin synthetases"/>
    <property type="match status" value="1"/>
</dbReference>
<dbReference type="SUPFAM" id="SSF55826">
    <property type="entry name" value="YbaK/ProRS associated domain"/>
    <property type="match status" value="1"/>
</dbReference>
<dbReference type="PROSITE" id="PS50862">
    <property type="entry name" value="AA_TRNA_LIGASE_II"/>
    <property type="match status" value="1"/>
</dbReference>
<feature type="chain" id="PRO_0000248792" description="Proline--tRNA ligase">
    <location>
        <begin position="1"/>
        <end position="600"/>
    </location>
</feature>
<proteinExistence type="inferred from homology"/>
<organism>
    <name type="scientific">Synechococcus sp. (strain ATCC 27144 / PCC 6301 / SAUG 1402/1)</name>
    <name type="common">Anacystis nidulans</name>
    <dbReference type="NCBI Taxonomy" id="269084"/>
    <lineage>
        <taxon>Bacteria</taxon>
        <taxon>Bacillati</taxon>
        <taxon>Cyanobacteriota</taxon>
        <taxon>Cyanophyceae</taxon>
        <taxon>Synechococcales</taxon>
        <taxon>Synechococcaceae</taxon>
        <taxon>Synechococcus</taxon>
    </lineage>
</organism>
<reference key="1">
    <citation type="journal article" date="2007" name="Photosyn. Res.">
        <title>Complete nucleotide sequence of the freshwater unicellular cyanobacterium Synechococcus elongatus PCC 6301 chromosome: gene content and organization.</title>
        <authorList>
            <person name="Sugita C."/>
            <person name="Ogata K."/>
            <person name="Shikata M."/>
            <person name="Jikuya H."/>
            <person name="Takano J."/>
            <person name="Furumichi M."/>
            <person name="Kanehisa M."/>
            <person name="Omata T."/>
            <person name="Sugiura M."/>
            <person name="Sugita M."/>
        </authorList>
    </citation>
    <scope>NUCLEOTIDE SEQUENCE [LARGE SCALE GENOMIC DNA]</scope>
    <source>
        <strain>ATCC 27144 / PCC 6301 / SAUG 1402/1</strain>
    </source>
</reference>
<accession>Q5N044</accession>
<gene>
    <name evidence="1" type="primary">proS</name>
    <name type="ordered locus">syc2136_c</name>
</gene>
<comment type="function">
    <text evidence="1">Catalyzes the attachment of proline to tRNA(Pro) in a two-step reaction: proline is first activated by ATP to form Pro-AMP and then transferred to the acceptor end of tRNA(Pro). As ProRS can inadvertently accommodate and process non-cognate amino acids such as alanine and cysteine, to avoid such errors it has two additional distinct editing activities against alanine. One activity is designated as 'pretransfer' editing and involves the tRNA(Pro)-independent hydrolysis of activated Ala-AMP. The other activity is designated 'posttransfer' editing and involves deacylation of mischarged Ala-tRNA(Pro). The misacylated Cys-tRNA(Pro) is not edited by ProRS.</text>
</comment>
<comment type="catalytic activity">
    <reaction evidence="1">
        <text>tRNA(Pro) + L-proline + ATP = L-prolyl-tRNA(Pro) + AMP + diphosphate</text>
        <dbReference type="Rhea" id="RHEA:14305"/>
        <dbReference type="Rhea" id="RHEA-COMP:9700"/>
        <dbReference type="Rhea" id="RHEA-COMP:9702"/>
        <dbReference type="ChEBI" id="CHEBI:30616"/>
        <dbReference type="ChEBI" id="CHEBI:33019"/>
        <dbReference type="ChEBI" id="CHEBI:60039"/>
        <dbReference type="ChEBI" id="CHEBI:78442"/>
        <dbReference type="ChEBI" id="CHEBI:78532"/>
        <dbReference type="ChEBI" id="CHEBI:456215"/>
        <dbReference type="EC" id="6.1.1.15"/>
    </reaction>
</comment>
<comment type="subunit">
    <text evidence="1">Homodimer.</text>
</comment>
<comment type="subcellular location">
    <subcellularLocation>
        <location evidence="1">Cytoplasm</location>
    </subcellularLocation>
</comment>
<comment type="domain">
    <text evidence="1">Consists of three domains: the N-terminal catalytic domain, the editing domain and the C-terminal anticodon-binding domain.</text>
</comment>
<comment type="similarity">
    <text evidence="1">Belongs to the class-II aminoacyl-tRNA synthetase family. ProS type 1 subfamily.</text>
</comment>
<evidence type="ECO:0000255" key="1">
    <source>
        <dbReference type="HAMAP-Rule" id="MF_01569"/>
    </source>
</evidence>
<name>SYP_SYNP6</name>
<protein>
    <recommendedName>
        <fullName evidence="1">Proline--tRNA ligase</fullName>
        <ecNumber evidence="1">6.1.1.15</ecNumber>
    </recommendedName>
    <alternativeName>
        <fullName evidence="1">Prolyl-tRNA synthetase</fullName>
        <shortName evidence="1">ProRS</shortName>
    </alternativeName>
</protein>
<keyword id="KW-0030">Aminoacyl-tRNA synthetase</keyword>
<keyword id="KW-0067">ATP-binding</keyword>
<keyword id="KW-0963">Cytoplasm</keyword>
<keyword id="KW-0436">Ligase</keyword>
<keyword id="KW-0547">Nucleotide-binding</keyword>
<keyword id="KW-0648">Protein biosynthesis</keyword>
<sequence length="600" mass="66254">MRLSQMLFVTLREDPAEAEIPSHKLLLRAGYIRRIASGIYAYLPLMWRVLRKVSQIVREEMDATGAQETLLPQLQPAELWQESGRWETYAKAEGIMFSLDDRQQRQLGLGPTHEEVITAVARDLIRSYRQLPQNLYQIQTKFRDEIRPRFGLMRGREFIMKDAYSFHADEESLRQTYAAMDQAYRNIFRRCGLQFRAVEADSGAIGGSASQEFMILADAGEDEILYTEDGRYAANVEKAVSLPAEAIASAFTTFEKRETPGTDTIASLCEFLKADPTQVVKQVLYQAVFDNGKLLPILISIRGDQSVNEIKLTNELTRRAADYGAKTVIALTVPDAEALKKWTAAPLPLGYLGPDLADSAIAVNESIIPKFLRLVDPTAAELQNFVTGANEVNFHVVGANWETNFPKPAVVDLRTALVGDRAQHDSSQVLASARGIEAGHIFQLGLKYSQAMGATFTTENGTEEPLWMGCYGIGVSRVAQAAVEQSYDKDGIIWPVAIAPYQAVVVIPNITDTEQVAAAEKIYADLTAAGIETLLDDRDERAGVKFKDADLIGIPYRIVTGRSLKEGKVEVVQRASKESSVIAVGSVVETVQDWIAAAIV</sequence>